<name>PG053_VACCC</name>
<comment type="function">
    <text evidence="1">Component of the entry fusion complex (EFC), which consists of 11 proteins. During cell infection, this complex mediates entry of the virion core into the host cytoplasm by a two-step mechanism consisting of lipid mixing of the viral and cellular membranes and subsequent pore formation.</text>
</comment>
<comment type="subunit">
    <text evidence="1">Component of the entry fusion complex (EFC) composed of OPG053, OPG076, OPG086, OPG094, OPG095, OPG099, OPG107, OPG143, OPG104, OPG147 and OPG155. Except for OPG095 and OPG052, each of the EFC proteins is required for assembly or stability of the complex.</text>
</comment>
<comment type="subcellular location">
    <subcellularLocation>
        <location evidence="1">Virion membrane</location>
        <topology evidence="1">Single-pass membrane protein</topology>
    </subcellularLocation>
    <text evidence="1">Component of the mature virion (MV) membrane.</text>
</comment>
<comment type="PTM">
    <text evidence="1">Disulfid bonds are oxidized in the cytoplasm by OPG088 protein.</text>
</comment>
<comment type="PTM">
    <text evidence="1">Unglycosylated because produced in viral factories instead of the classic ER -Golgi route.</text>
</comment>
<comment type="similarity">
    <text evidence="3">Belongs to the orthopoxvirus OPG053 family.</text>
</comment>
<evidence type="ECO:0000250" key="1">
    <source>
        <dbReference type="UniProtKB" id="P24361"/>
    </source>
</evidence>
<evidence type="ECO:0000255" key="2"/>
<evidence type="ECO:0000305" key="3"/>
<organismHost>
    <name type="scientific">Homo sapiens</name>
    <name type="common">Human</name>
    <dbReference type="NCBI Taxonomy" id="9606"/>
</organismHost>
<reference key="1">
    <citation type="journal article" date="1990" name="Virology">
        <title>The complete DNA sequence of vaccinia virus.</title>
        <authorList>
            <person name="Goebel S.J."/>
            <person name="Johnson G.P."/>
            <person name="Perkus M.E."/>
            <person name="Davis S.W."/>
            <person name="Winslow J.P."/>
            <person name="Paoletti E."/>
        </authorList>
    </citation>
    <scope>NUCLEOTIDE SEQUENCE [LARGE SCALE GENOMIC DNA]</scope>
</reference>
<reference key="2">
    <citation type="journal article" date="1990" name="Virology">
        <title>Appendix to 'The complete DNA sequence of vaccinia virus'.</title>
        <authorList>
            <person name="Goebel S.J."/>
            <person name="Johnson G.P."/>
            <person name="Perkus M.E."/>
            <person name="Davis S.W."/>
            <person name="Winslow J.P."/>
            <person name="Paoletti E."/>
        </authorList>
    </citation>
    <scope>NUCLEOTIDE SEQUENCE [LARGE SCALE GENOMIC DNA]</scope>
</reference>
<proteinExistence type="inferred from homology"/>
<feature type="chain" id="PRO_0000099491" description="EFC-associated protein OPG053">
    <location>
        <begin position="1"/>
        <end position="212"/>
    </location>
</feature>
<feature type="topological domain" description="Virion surface" evidence="2">
    <location>
        <begin position="1"/>
        <end position="175"/>
    </location>
</feature>
<feature type="transmembrane region" description="Helical" evidence="2">
    <location>
        <begin position="176"/>
        <end position="196"/>
    </location>
</feature>
<feature type="topological domain" description="Intravirion" evidence="2">
    <location>
        <begin position="197"/>
        <end position="212"/>
    </location>
</feature>
<feature type="disulfide bond" description="by OPG088" evidence="1">
    <location>
        <begin position="33"/>
        <end position="55"/>
    </location>
</feature>
<feature type="disulfide bond" description="by OPG088" evidence="1">
    <location>
        <begin position="47"/>
        <end position="127"/>
    </location>
</feature>
<feature type="disulfide bond" description="by OPG088" evidence="1">
    <location>
        <begin position="107"/>
        <end position="149"/>
    </location>
</feature>
<accession>P68452</accession>
<accession>P21018</accession>
<dbReference type="EMBL" id="M35027">
    <property type="protein sequence ID" value="AAA48025.1"/>
    <property type="molecule type" value="Genomic_DNA"/>
</dbReference>
<dbReference type="PIR" id="E42507">
    <property type="entry name" value="E42507"/>
</dbReference>
<dbReference type="SMR" id="P68452"/>
<dbReference type="Proteomes" id="UP000008269">
    <property type="component" value="Segment"/>
</dbReference>
<dbReference type="GO" id="GO:0016020">
    <property type="term" value="C:membrane"/>
    <property type="evidence" value="ECO:0007669"/>
    <property type="project" value="UniProtKB-KW"/>
</dbReference>
<dbReference type="GO" id="GO:0019031">
    <property type="term" value="C:viral envelope"/>
    <property type="evidence" value="ECO:0007669"/>
    <property type="project" value="UniProtKB-KW"/>
</dbReference>
<dbReference type="GO" id="GO:0055036">
    <property type="term" value="C:virion membrane"/>
    <property type="evidence" value="ECO:0007669"/>
    <property type="project" value="UniProtKB-SubCell"/>
</dbReference>
<dbReference type="InterPro" id="IPR003472">
    <property type="entry name" value="Virion_mem_poxvirus_L1"/>
</dbReference>
<dbReference type="Pfam" id="PF02442">
    <property type="entry name" value="L1R_F9L"/>
    <property type="match status" value="1"/>
</dbReference>
<sequence>MAETKEFKTLYNLFIDSYLQKLAQHSIPTNVTCAIHIGEVIGQFKNCALRITNKCMSNSRLSFTLMVESFIEVISLLPEKDRRAIAEEIGIDLDDVPSAVSKLEKNCNAYAEVNNIIDIQKLDIGECSAPPGQHMLLQIVNTGSAEANCGLQTIVKSLNKIYVPPIIENRLPYYDPWFLVGVAIILVIFTVAICSIRRNLALKYRYGTFLYV</sequence>
<protein>
    <recommendedName>
        <fullName>EFC-associated protein OPG053</fullName>
    </recommendedName>
    <alternativeName>
        <fullName>Protein F9</fullName>
    </alternativeName>
</protein>
<gene>
    <name type="primary">OPG053</name>
    <name type="ORF">F9L</name>
</gene>
<organism>
    <name type="scientific">Vaccinia virus (strain Copenhagen)</name>
    <name type="common">VACV</name>
    <dbReference type="NCBI Taxonomy" id="10249"/>
    <lineage>
        <taxon>Viruses</taxon>
        <taxon>Varidnaviria</taxon>
        <taxon>Bamfordvirae</taxon>
        <taxon>Nucleocytoviricota</taxon>
        <taxon>Pokkesviricetes</taxon>
        <taxon>Chitovirales</taxon>
        <taxon>Poxviridae</taxon>
        <taxon>Chordopoxvirinae</taxon>
        <taxon>Orthopoxvirus</taxon>
        <taxon>Vaccinia virus</taxon>
    </lineage>
</organism>
<keyword id="KW-1015">Disulfide bond</keyword>
<keyword id="KW-0426">Late protein</keyword>
<keyword id="KW-0472">Membrane</keyword>
<keyword id="KW-1185">Reference proteome</keyword>
<keyword id="KW-0812">Transmembrane</keyword>
<keyword id="KW-1133">Transmembrane helix</keyword>
<keyword id="KW-0261">Viral envelope protein</keyword>
<keyword id="KW-0946">Virion</keyword>